<organism>
    <name type="scientific">Cupriavidus necator (strain ATCC 17699 / DSM 428 / KCTC 22496 / NCIMB 10442 / H16 / Stanier 337)</name>
    <name type="common">Ralstonia eutropha</name>
    <dbReference type="NCBI Taxonomy" id="381666"/>
    <lineage>
        <taxon>Bacteria</taxon>
        <taxon>Pseudomonadati</taxon>
        <taxon>Pseudomonadota</taxon>
        <taxon>Betaproteobacteria</taxon>
        <taxon>Burkholderiales</taxon>
        <taxon>Burkholderiaceae</taxon>
        <taxon>Cupriavidus</taxon>
    </lineage>
</organism>
<keyword id="KW-0012">Acyltransferase</keyword>
<keyword id="KW-0133">Cell shape</keyword>
<keyword id="KW-0961">Cell wall biogenesis/degradation</keyword>
<keyword id="KW-0963">Cytoplasm</keyword>
<keyword id="KW-0460">Magnesium</keyword>
<keyword id="KW-0479">Metal-binding</keyword>
<keyword id="KW-0511">Multifunctional enzyme</keyword>
<keyword id="KW-0548">Nucleotidyltransferase</keyword>
<keyword id="KW-0573">Peptidoglycan synthesis</keyword>
<keyword id="KW-1185">Reference proteome</keyword>
<keyword id="KW-0677">Repeat</keyword>
<keyword id="KW-0808">Transferase</keyword>
<sequence>MNIVILAAGMGKRMYSDLPKVLHPVAGRPMLAHVLDTARALSPSRLVVVVGHGAARVREAVAADDVAFAEQPQQLGTGHAVMQALPLLDDSQPTLVLYGDVPLTSAATLQALVAEAGTQRLGVLTVEMPDPTGYGRIVRDAAGSIVRIVEQKDASEAEKAIREINTGIIVCPTGHLRKWLSTLRNDNAQGEYYLTDTVERAVADGVETVSAQPAAIWETLGVNSKLQLAEVERIHQGNQARRLLEAGVTLLDPARIDVRGELSCGRDVTIDVGCVFEGRVHLEDGVRIGAHCVIRNSTVGAGAQVHPFCHIDEARVGPAGRIGPYARLRPGTELGEDVHIGNFVEVKNAQVAAHSKANHLAYVGDATVGSRVNIGAGTITCNYDGVNKHRTVIEDDVFIGSDTQLVAPVTVRRGATLGAGTTLTKEAPADKLTLSRAKQLTIDAWQRPVKQPKK</sequence>
<feature type="chain" id="PRO_1000056191" description="Bifunctional protein GlmU">
    <location>
        <begin position="1"/>
        <end position="454"/>
    </location>
</feature>
<feature type="region of interest" description="Pyrophosphorylase" evidence="1">
    <location>
        <begin position="1"/>
        <end position="225"/>
    </location>
</feature>
<feature type="region of interest" description="Linker" evidence="1">
    <location>
        <begin position="226"/>
        <end position="246"/>
    </location>
</feature>
<feature type="region of interest" description="N-acetyltransferase" evidence="1">
    <location>
        <begin position="247"/>
        <end position="454"/>
    </location>
</feature>
<feature type="active site" description="Proton acceptor" evidence="1">
    <location>
        <position position="359"/>
    </location>
</feature>
<feature type="binding site" evidence="1">
    <location>
        <begin position="6"/>
        <end position="9"/>
    </location>
    <ligand>
        <name>UDP-N-acetyl-alpha-D-glucosamine</name>
        <dbReference type="ChEBI" id="CHEBI:57705"/>
    </ligand>
</feature>
<feature type="binding site" evidence="1">
    <location>
        <position position="20"/>
    </location>
    <ligand>
        <name>UDP-N-acetyl-alpha-D-glucosamine</name>
        <dbReference type="ChEBI" id="CHEBI:57705"/>
    </ligand>
</feature>
<feature type="binding site" evidence="1">
    <location>
        <position position="71"/>
    </location>
    <ligand>
        <name>UDP-N-acetyl-alpha-D-glucosamine</name>
        <dbReference type="ChEBI" id="CHEBI:57705"/>
    </ligand>
</feature>
<feature type="binding site" evidence="1">
    <location>
        <begin position="76"/>
        <end position="77"/>
    </location>
    <ligand>
        <name>UDP-N-acetyl-alpha-D-glucosamine</name>
        <dbReference type="ChEBI" id="CHEBI:57705"/>
    </ligand>
</feature>
<feature type="binding site" evidence="1">
    <location>
        <begin position="98"/>
        <end position="100"/>
    </location>
    <ligand>
        <name>UDP-N-acetyl-alpha-D-glucosamine</name>
        <dbReference type="ChEBI" id="CHEBI:57705"/>
    </ligand>
</feature>
<feature type="binding site" evidence="1">
    <location>
        <position position="100"/>
    </location>
    <ligand>
        <name>Mg(2+)</name>
        <dbReference type="ChEBI" id="CHEBI:18420"/>
    </ligand>
</feature>
<feature type="binding site" evidence="1">
    <location>
        <position position="135"/>
    </location>
    <ligand>
        <name>UDP-N-acetyl-alpha-D-glucosamine</name>
        <dbReference type="ChEBI" id="CHEBI:57705"/>
    </ligand>
</feature>
<feature type="binding site" evidence="1">
    <location>
        <position position="150"/>
    </location>
    <ligand>
        <name>UDP-N-acetyl-alpha-D-glucosamine</name>
        <dbReference type="ChEBI" id="CHEBI:57705"/>
    </ligand>
</feature>
<feature type="binding site" evidence="1">
    <location>
        <position position="165"/>
    </location>
    <ligand>
        <name>UDP-N-acetyl-alpha-D-glucosamine</name>
        <dbReference type="ChEBI" id="CHEBI:57705"/>
    </ligand>
</feature>
<feature type="binding site" evidence="1">
    <location>
        <position position="223"/>
    </location>
    <ligand>
        <name>Mg(2+)</name>
        <dbReference type="ChEBI" id="CHEBI:18420"/>
    </ligand>
</feature>
<feature type="binding site" evidence="1">
    <location>
        <position position="223"/>
    </location>
    <ligand>
        <name>UDP-N-acetyl-alpha-D-glucosamine</name>
        <dbReference type="ChEBI" id="CHEBI:57705"/>
    </ligand>
</feature>
<feature type="binding site" evidence="1">
    <location>
        <position position="329"/>
    </location>
    <ligand>
        <name>UDP-N-acetyl-alpha-D-glucosamine</name>
        <dbReference type="ChEBI" id="CHEBI:57705"/>
    </ligand>
</feature>
<feature type="binding site" evidence="1">
    <location>
        <position position="347"/>
    </location>
    <ligand>
        <name>UDP-N-acetyl-alpha-D-glucosamine</name>
        <dbReference type="ChEBI" id="CHEBI:57705"/>
    </ligand>
</feature>
<feature type="binding site" evidence="1">
    <location>
        <position position="362"/>
    </location>
    <ligand>
        <name>UDP-N-acetyl-alpha-D-glucosamine</name>
        <dbReference type="ChEBI" id="CHEBI:57705"/>
    </ligand>
</feature>
<feature type="binding site" evidence="1">
    <location>
        <position position="373"/>
    </location>
    <ligand>
        <name>UDP-N-acetyl-alpha-D-glucosamine</name>
        <dbReference type="ChEBI" id="CHEBI:57705"/>
    </ligand>
</feature>
<feature type="binding site" evidence="1">
    <location>
        <position position="376"/>
    </location>
    <ligand>
        <name>acetyl-CoA</name>
        <dbReference type="ChEBI" id="CHEBI:57288"/>
    </ligand>
</feature>
<feature type="binding site" evidence="1">
    <location>
        <begin position="382"/>
        <end position="383"/>
    </location>
    <ligand>
        <name>acetyl-CoA</name>
        <dbReference type="ChEBI" id="CHEBI:57288"/>
    </ligand>
</feature>
<feature type="binding site" evidence="1">
    <location>
        <position position="401"/>
    </location>
    <ligand>
        <name>acetyl-CoA</name>
        <dbReference type="ChEBI" id="CHEBI:57288"/>
    </ligand>
</feature>
<feature type="binding site" evidence="1">
    <location>
        <position position="419"/>
    </location>
    <ligand>
        <name>acetyl-CoA</name>
        <dbReference type="ChEBI" id="CHEBI:57288"/>
    </ligand>
</feature>
<feature type="binding site" evidence="1">
    <location>
        <position position="436"/>
    </location>
    <ligand>
        <name>acetyl-CoA</name>
        <dbReference type="ChEBI" id="CHEBI:57288"/>
    </ligand>
</feature>
<gene>
    <name evidence="1" type="primary">glmU</name>
    <name type="ordered locus">H16_A0262</name>
</gene>
<reference key="1">
    <citation type="journal article" date="2006" name="Nat. Biotechnol.">
        <title>Genome sequence of the bioplastic-producing 'Knallgas' bacterium Ralstonia eutropha H16.</title>
        <authorList>
            <person name="Pohlmann A."/>
            <person name="Fricke W.F."/>
            <person name="Reinecke F."/>
            <person name="Kusian B."/>
            <person name="Liesegang H."/>
            <person name="Cramm R."/>
            <person name="Eitinger T."/>
            <person name="Ewering C."/>
            <person name="Poetter M."/>
            <person name="Schwartz E."/>
            <person name="Strittmatter A."/>
            <person name="Voss I."/>
            <person name="Gottschalk G."/>
            <person name="Steinbuechel A."/>
            <person name="Friedrich B."/>
            <person name="Bowien B."/>
        </authorList>
    </citation>
    <scope>NUCLEOTIDE SEQUENCE [LARGE SCALE GENOMIC DNA]</scope>
    <source>
        <strain>ATCC 17699 / DSM 428 / KCTC 22496 / NCIMB 10442 / H16 / Stanier 337</strain>
    </source>
</reference>
<evidence type="ECO:0000255" key="1">
    <source>
        <dbReference type="HAMAP-Rule" id="MF_01631"/>
    </source>
</evidence>
<name>GLMU_CUPNH</name>
<comment type="function">
    <text evidence="1">Catalyzes the last two sequential reactions in the de novo biosynthetic pathway for UDP-N-acetylglucosamine (UDP-GlcNAc). The C-terminal domain catalyzes the transfer of acetyl group from acetyl coenzyme A to glucosamine-1-phosphate (GlcN-1-P) to produce N-acetylglucosamine-1-phosphate (GlcNAc-1-P), which is converted into UDP-GlcNAc by the transfer of uridine 5-monophosphate (from uridine 5-triphosphate), a reaction catalyzed by the N-terminal domain.</text>
</comment>
<comment type="catalytic activity">
    <reaction evidence="1">
        <text>alpha-D-glucosamine 1-phosphate + acetyl-CoA = N-acetyl-alpha-D-glucosamine 1-phosphate + CoA + H(+)</text>
        <dbReference type="Rhea" id="RHEA:13725"/>
        <dbReference type="ChEBI" id="CHEBI:15378"/>
        <dbReference type="ChEBI" id="CHEBI:57287"/>
        <dbReference type="ChEBI" id="CHEBI:57288"/>
        <dbReference type="ChEBI" id="CHEBI:57776"/>
        <dbReference type="ChEBI" id="CHEBI:58516"/>
        <dbReference type="EC" id="2.3.1.157"/>
    </reaction>
</comment>
<comment type="catalytic activity">
    <reaction evidence="1">
        <text>N-acetyl-alpha-D-glucosamine 1-phosphate + UTP + H(+) = UDP-N-acetyl-alpha-D-glucosamine + diphosphate</text>
        <dbReference type="Rhea" id="RHEA:13509"/>
        <dbReference type="ChEBI" id="CHEBI:15378"/>
        <dbReference type="ChEBI" id="CHEBI:33019"/>
        <dbReference type="ChEBI" id="CHEBI:46398"/>
        <dbReference type="ChEBI" id="CHEBI:57705"/>
        <dbReference type="ChEBI" id="CHEBI:57776"/>
        <dbReference type="EC" id="2.7.7.23"/>
    </reaction>
</comment>
<comment type="cofactor">
    <cofactor evidence="1">
        <name>Mg(2+)</name>
        <dbReference type="ChEBI" id="CHEBI:18420"/>
    </cofactor>
    <text evidence="1">Binds 1 Mg(2+) ion per subunit.</text>
</comment>
<comment type="pathway">
    <text evidence="1">Nucleotide-sugar biosynthesis; UDP-N-acetyl-alpha-D-glucosamine biosynthesis; N-acetyl-alpha-D-glucosamine 1-phosphate from alpha-D-glucosamine 6-phosphate (route II): step 2/2.</text>
</comment>
<comment type="pathway">
    <text evidence="1">Nucleotide-sugar biosynthesis; UDP-N-acetyl-alpha-D-glucosamine biosynthesis; UDP-N-acetyl-alpha-D-glucosamine from N-acetyl-alpha-D-glucosamine 1-phosphate: step 1/1.</text>
</comment>
<comment type="pathway">
    <text evidence="1">Bacterial outer membrane biogenesis; LPS lipid A biosynthesis.</text>
</comment>
<comment type="subunit">
    <text evidence="1">Homotrimer.</text>
</comment>
<comment type="subcellular location">
    <subcellularLocation>
        <location evidence="1">Cytoplasm</location>
    </subcellularLocation>
</comment>
<comment type="similarity">
    <text evidence="1">In the N-terminal section; belongs to the N-acetylglucosamine-1-phosphate uridyltransferase family.</text>
</comment>
<comment type="similarity">
    <text evidence="1">In the C-terminal section; belongs to the transferase hexapeptide repeat family.</text>
</comment>
<proteinExistence type="inferred from homology"/>
<accession>Q0KF07</accession>
<protein>
    <recommendedName>
        <fullName evidence="1">Bifunctional protein GlmU</fullName>
    </recommendedName>
    <domain>
        <recommendedName>
            <fullName evidence="1">UDP-N-acetylglucosamine pyrophosphorylase</fullName>
            <ecNumber evidence="1">2.7.7.23</ecNumber>
        </recommendedName>
        <alternativeName>
            <fullName evidence="1">N-acetylglucosamine-1-phosphate uridyltransferase</fullName>
        </alternativeName>
    </domain>
    <domain>
        <recommendedName>
            <fullName evidence="1">Glucosamine-1-phosphate N-acetyltransferase</fullName>
            <ecNumber evidence="1">2.3.1.157</ecNumber>
        </recommendedName>
    </domain>
</protein>
<dbReference type="EC" id="2.7.7.23" evidence="1"/>
<dbReference type="EC" id="2.3.1.157" evidence="1"/>
<dbReference type="EMBL" id="AM260479">
    <property type="protein sequence ID" value="CAJ91414.1"/>
    <property type="molecule type" value="Genomic_DNA"/>
</dbReference>
<dbReference type="RefSeq" id="WP_011614435.1">
    <property type="nucleotide sequence ID" value="NC_008313.1"/>
</dbReference>
<dbReference type="SMR" id="Q0KF07"/>
<dbReference type="STRING" id="381666.H16_A0262"/>
<dbReference type="KEGG" id="reh:H16_A0262"/>
<dbReference type="PATRIC" id="fig|381666.6.peg.622"/>
<dbReference type="eggNOG" id="COG1207">
    <property type="taxonomic scope" value="Bacteria"/>
</dbReference>
<dbReference type="HOGENOM" id="CLU_029499_15_2_4"/>
<dbReference type="OrthoDB" id="9775031at2"/>
<dbReference type="UniPathway" id="UPA00113">
    <property type="reaction ID" value="UER00532"/>
</dbReference>
<dbReference type="UniPathway" id="UPA00113">
    <property type="reaction ID" value="UER00533"/>
</dbReference>
<dbReference type="UniPathway" id="UPA00973"/>
<dbReference type="Proteomes" id="UP000008210">
    <property type="component" value="Chromosome 1"/>
</dbReference>
<dbReference type="GO" id="GO:0005737">
    <property type="term" value="C:cytoplasm"/>
    <property type="evidence" value="ECO:0007669"/>
    <property type="project" value="UniProtKB-SubCell"/>
</dbReference>
<dbReference type="GO" id="GO:0016020">
    <property type="term" value="C:membrane"/>
    <property type="evidence" value="ECO:0007669"/>
    <property type="project" value="GOC"/>
</dbReference>
<dbReference type="GO" id="GO:0019134">
    <property type="term" value="F:glucosamine-1-phosphate N-acetyltransferase activity"/>
    <property type="evidence" value="ECO:0007669"/>
    <property type="project" value="UniProtKB-UniRule"/>
</dbReference>
<dbReference type="GO" id="GO:0000287">
    <property type="term" value="F:magnesium ion binding"/>
    <property type="evidence" value="ECO:0007669"/>
    <property type="project" value="UniProtKB-UniRule"/>
</dbReference>
<dbReference type="GO" id="GO:0003977">
    <property type="term" value="F:UDP-N-acetylglucosamine diphosphorylase activity"/>
    <property type="evidence" value="ECO:0007669"/>
    <property type="project" value="UniProtKB-UniRule"/>
</dbReference>
<dbReference type="GO" id="GO:0000902">
    <property type="term" value="P:cell morphogenesis"/>
    <property type="evidence" value="ECO:0007669"/>
    <property type="project" value="UniProtKB-UniRule"/>
</dbReference>
<dbReference type="GO" id="GO:0071555">
    <property type="term" value="P:cell wall organization"/>
    <property type="evidence" value="ECO:0007669"/>
    <property type="project" value="UniProtKB-KW"/>
</dbReference>
<dbReference type="GO" id="GO:0009245">
    <property type="term" value="P:lipid A biosynthetic process"/>
    <property type="evidence" value="ECO:0007669"/>
    <property type="project" value="UniProtKB-UniRule"/>
</dbReference>
<dbReference type="GO" id="GO:0009252">
    <property type="term" value="P:peptidoglycan biosynthetic process"/>
    <property type="evidence" value="ECO:0007669"/>
    <property type="project" value="UniProtKB-UniRule"/>
</dbReference>
<dbReference type="GO" id="GO:0008360">
    <property type="term" value="P:regulation of cell shape"/>
    <property type="evidence" value="ECO:0007669"/>
    <property type="project" value="UniProtKB-KW"/>
</dbReference>
<dbReference type="GO" id="GO:0006048">
    <property type="term" value="P:UDP-N-acetylglucosamine biosynthetic process"/>
    <property type="evidence" value="ECO:0007669"/>
    <property type="project" value="UniProtKB-UniPathway"/>
</dbReference>
<dbReference type="CDD" id="cd02540">
    <property type="entry name" value="GT2_GlmU_N_bac"/>
    <property type="match status" value="1"/>
</dbReference>
<dbReference type="CDD" id="cd03353">
    <property type="entry name" value="LbH_GlmU_C"/>
    <property type="match status" value="1"/>
</dbReference>
<dbReference type="Gene3D" id="2.160.10.10">
    <property type="entry name" value="Hexapeptide repeat proteins"/>
    <property type="match status" value="1"/>
</dbReference>
<dbReference type="Gene3D" id="3.90.550.10">
    <property type="entry name" value="Spore Coat Polysaccharide Biosynthesis Protein SpsA, Chain A"/>
    <property type="match status" value="1"/>
</dbReference>
<dbReference type="HAMAP" id="MF_01631">
    <property type="entry name" value="GlmU"/>
    <property type="match status" value="1"/>
</dbReference>
<dbReference type="InterPro" id="IPR005882">
    <property type="entry name" value="Bifunctional_GlmU"/>
</dbReference>
<dbReference type="InterPro" id="IPR050065">
    <property type="entry name" value="GlmU-like"/>
</dbReference>
<dbReference type="InterPro" id="IPR038009">
    <property type="entry name" value="GlmU_C_LbH"/>
</dbReference>
<dbReference type="InterPro" id="IPR001451">
    <property type="entry name" value="Hexapep"/>
</dbReference>
<dbReference type="InterPro" id="IPR025877">
    <property type="entry name" value="MobA-like_NTP_Trfase"/>
</dbReference>
<dbReference type="InterPro" id="IPR029044">
    <property type="entry name" value="Nucleotide-diphossugar_trans"/>
</dbReference>
<dbReference type="InterPro" id="IPR011004">
    <property type="entry name" value="Trimer_LpxA-like_sf"/>
</dbReference>
<dbReference type="NCBIfam" id="TIGR01173">
    <property type="entry name" value="glmU"/>
    <property type="match status" value="1"/>
</dbReference>
<dbReference type="PANTHER" id="PTHR43584:SF3">
    <property type="entry name" value="BIFUNCTIONAL PROTEIN GLMU"/>
    <property type="match status" value="1"/>
</dbReference>
<dbReference type="PANTHER" id="PTHR43584">
    <property type="entry name" value="NUCLEOTIDYL TRANSFERASE"/>
    <property type="match status" value="1"/>
</dbReference>
<dbReference type="Pfam" id="PF14602">
    <property type="entry name" value="Hexapep_2"/>
    <property type="match status" value="1"/>
</dbReference>
<dbReference type="Pfam" id="PF12804">
    <property type="entry name" value="NTP_transf_3"/>
    <property type="match status" value="1"/>
</dbReference>
<dbReference type="SUPFAM" id="SSF53448">
    <property type="entry name" value="Nucleotide-diphospho-sugar transferases"/>
    <property type="match status" value="1"/>
</dbReference>
<dbReference type="SUPFAM" id="SSF51161">
    <property type="entry name" value="Trimeric LpxA-like enzymes"/>
    <property type="match status" value="1"/>
</dbReference>